<reference key="1">
    <citation type="journal article" date="2005" name="Nat. Biotechnol.">
        <title>Complete genome sequence of the acetic acid bacterium Gluconobacter oxydans.</title>
        <authorList>
            <person name="Prust C."/>
            <person name="Hoffmeister M."/>
            <person name="Liesegang H."/>
            <person name="Wiezer A."/>
            <person name="Fricke W.F."/>
            <person name="Ehrenreich A."/>
            <person name="Gottschalk G."/>
            <person name="Deppenmeier U."/>
        </authorList>
    </citation>
    <scope>NUCLEOTIDE SEQUENCE [LARGE SCALE GENOMIC DNA]</scope>
    <source>
        <strain>621H</strain>
    </source>
</reference>
<sequence length="254" mass="27165">MTAKTIDLNADLGESFGHYTMGNDSAMLDIVTSANVACGFHGGDPEVMAETFRIAREKGVSVGSHPGFPDLWGFGRRVMPFTPAQIERIVAYQIGAAQALATYSGHRMTYMKTHGALGNLTERDPAVAEAIVNAVKAVDANLPIMAIALSHLERIGRERGLTVFSEIFADRAYTEDGHLVSRKEPGAVLHDADFAAARAVRMVQNGAIETISGKMLPTRIDTICVHGDNAESVEVARKVRAGFEAAGIAVRALT</sequence>
<evidence type="ECO:0000255" key="1">
    <source>
        <dbReference type="HAMAP-Rule" id="MF_00691"/>
    </source>
</evidence>
<dbReference type="EC" id="3.5.2.9" evidence="1"/>
<dbReference type="EMBL" id="CP000009">
    <property type="protein sequence ID" value="AAW60000.1"/>
    <property type="molecule type" value="Genomic_DNA"/>
</dbReference>
<dbReference type="RefSeq" id="WP_011251803.1">
    <property type="nucleotide sequence ID" value="NC_006677.1"/>
</dbReference>
<dbReference type="SMR" id="Q5FUE6"/>
<dbReference type="STRING" id="290633.GOX0211"/>
<dbReference type="KEGG" id="gox:GOX0211"/>
<dbReference type="eggNOG" id="COG1540">
    <property type="taxonomic scope" value="Bacteria"/>
</dbReference>
<dbReference type="HOGENOM" id="CLU_069535_0_0_5"/>
<dbReference type="Proteomes" id="UP000006375">
    <property type="component" value="Chromosome"/>
</dbReference>
<dbReference type="GO" id="GO:0017168">
    <property type="term" value="F:5-oxoprolinase (ATP-hydrolyzing) activity"/>
    <property type="evidence" value="ECO:0007669"/>
    <property type="project" value="UniProtKB-UniRule"/>
</dbReference>
<dbReference type="GO" id="GO:0005524">
    <property type="term" value="F:ATP binding"/>
    <property type="evidence" value="ECO:0007669"/>
    <property type="project" value="UniProtKB-UniRule"/>
</dbReference>
<dbReference type="GO" id="GO:0005975">
    <property type="term" value="P:carbohydrate metabolic process"/>
    <property type="evidence" value="ECO:0007669"/>
    <property type="project" value="InterPro"/>
</dbReference>
<dbReference type="CDD" id="cd10787">
    <property type="entry name" value="LamB_YcsF_like"/>
    <property type="match status" value="1"/>
</dbReference>
<dbReference type="Gene3D" id="3.20.20.370">
    <property type="entry name" value="Glycoside hydrolase/deacetylase"/>
    <property type="match status" value="1"/>
</dbReference>
<dbReference type="HAMAP" id="MF_00691">
    <property type="entry name" value="PxpA"/>
    <property type="match status" value="1"/>
</dbReference>
<dbReference type="InterPro" id="IPR011330">
    <property type="entry name" value="Glyco_hydro/deAcase_b/a-brl"/>
</dbReference>
<dbReference type="InterPro" id="IPR005501">
    <property type="entry name" value="LamB/YcsF/PxpA-like"/>
</dbReference>
<dbReference type="NCBIfam" id="NF003814">
    <property type="entry name" value="PRK05406.1-3"/>
    <property type="match status" value="1"/>
</dbReference>
<dbReference type="NCBIfam" id="NF003816">
    <property type="entry name" value="PRK05406.1-5"/>
    <property type="match status" value="1"/>
</dbReference>
<dbReference type="PANTHER" id="PTHR30292:SF0">
    <property type="entry name" value="5-OXOPROLINASE SUBUNIT A"/>
    <property type="match status" value="1"/>
</dbReference>
<dbReference type="PANTHER" id="PTHR30292">
    <property type="entry name" value="UNCHARACTERIZED PROTEIN YBGL-RELATED"/>
    <property type="match status" value="1"/>
</dbReference>
<dbReference type="Pfam" id="PF03746">
    <property type="entry name" value="LamB_YcsF"/>
    <property type="match status" value="1"/>
</dbReference>
<dbReference type="SUPFAM" id="SSF88713">
    <property type="entry name" value="Glycoside hydrolase/deacetylase"/>
    <property type="match status" value="1"/>
</dbReference>
<organism>
    <name type="scientific">Gluconobacter oxydans (strain 621H)</name>
    <name type="common">Gluconobacter suboxydans</name>
    <dbReference type="NCBI Taxonomy" id="290633"/>
    <lineage>
        <taxon>Bacteria</taxon>
        <taxon>Pseudomonadati</taxon>
        <taxon>Pseudomonadota</taxon>
        <taxon>Alphaproteobacteria</taxon>
        <taxon>Acetobacterales</taxon>
        <taxon>Acetobacteraceae</taxon>
        <taxon>Gluconobacter</taxon>
    </lineage>
</organism>
<name>PXPA_GLUOX</name>
<keyword id="KW-0067">ATP-binding</keyword>
<keyword id="KW-0378">Hydrolase</keyword>
<keyword id="KW-0547">Nucleotide-binding</keyword>
<keyword id="KW-1185">Reference proteome</keyword>
<feature type="chain" id="PRO_0000185013" description="5-oxoprolinase subunit A">
    <location>
        <begin position="1"/>
        <end position="254"/>
    </location>
</feature>
<comment type="function">
    <text evidence="1">Catalyzes the cleavage of 5-oxoproline to form L-glutamate coupled to the hydrolysis of ATP to ADP and inorganic phosphate.</text>
</comment>
<comment type="catalytic activity">
    <reaction evidence="1">
        <text>5-oxo-L-proline + ATP + 2 H2O = L-glutamate + ADP + phosphate + H(+)</text>
        <dbReference type="Rhea" id="RHEA:10348"/>
        <dbReference type="ChEBI" id="CHEBI:15377"/>
        <dbReference type="ChEBI" id="CHEBI:15378"/>
        <dbReference type="ChEBI" id="CHEBI:29985"/>
        <dbReference type="ChEBI" id="CHEBI:30616"/>
        <dbReference type="ChEBI" id="CHEBI:43474"/>
        <dbReference type="ChEBI" id="CHEBI:58402"/>
        <dbReference type="ChEBI" id="CHEBI:456216"/>
        <dbReference type="EC" id="3.5.2.9"/>
    </reaction>
</comment>
<comment type="subunit">
    <text evidence="1">Forms a complex composed of PxpA, PxpB and PxpC.</text>
</comment>
<comment type="similarity">
    <text evidence="1">Belongs to the LamB/PxpA family.</text>
</comment>
<gene>
    <name evidence="1" type="primary">pxpA</name>
    <name type="ordered locus">GOX0211</name>
</gene>
<proteinExistence type="inferred from homology"/>
<accession>Q5FUE6</accession>
<protein>
    <recommendedName>
        <fullName evidence="1">5-oxoprolinase subunit A</fullName>
        <shortName evidence="1">5-OPase subunit A</shortName>
        <ecNumber evidence="1">3.5.2.9</ecNumber>
    </recommendedName>
    <alternativeName>
        <fullName evidence="1">5-oxoprolinase (ATP-hydrolyzing) subunit A</fullName>
    </alternativeName>
</protein>